<feature type="chain" id="PRO_0000327200" description="Protoheme IX farnesyltransferase">
    <location>
        <begin position="1"/>
        <end position="288"/>
    </location>
</feature>
<feature type="transmembrane region" description="Helical" evidence="1">
    <location>
        <begin position="16"/>
        <end position="36"/>
    </location>
</feature>
<feature type="transmembrane region" description="Helical" evidence="1">
    <location>
        <begin position="37"/>
        <end position="57"/>
    </location>
</feature>
<feature type="transmembrane region" description="Helical" evidence="1">
    <location>
        <begin position="88"/>
        <end position="108"/>
    </location>
</feature>
<feature type="transmembrane region" description="Helical" evidence="1">
    <location>
        <begin position="111"/>
        <end position="131"/>
    </location>
</feature>
<feature type="transmembrane region" description="Helical" evidence="1">
    <location>
        <begin position="138"/>
        <end position="158"/>
    </location>
</feature>
<feature type="transmembrane region" description="Helical" evidence="1">
    <location>
        <begin position="162"/>
        <end position="182"/>
    </location>
</feature>
<feature type="transmembrane region" description="Helical" evidence="1">
    <location>
        <begin position="210"/>
        <end position="230"/>
    </location>
</feature>
<feature type="transmembrane region" description="Helical" evidence="1">
    <location>
        <begin position="236"/>
        <end position="256"/>
    </location>
</feature>
<feature type="transmembrane region" description="Helical" evidence="1">
    <location>
        <begin position="265"/>
        <end position="285"/>
    </location>
</feature>
<keyword id="KW-1003">Cell membrane</keyword>
<keyword id="KW-0350">Heme biosynthesis</keyword>
<keyword id="KW-0472">Membrane</keyword>
<keyword id="KW-1185">Reference proteome</keyword>
<keyword id="KW-0808">Transferase</keyword>
<keyword id="KW-0812">Transmembrane</keyword>
<keyword id="KW-1133">Transmembrane helix</keyword>
<accession>Q9HL05</accession>
<organism>
    <name type="scientific">Thermoplasma acidophilum (strain ATCC 25905 / DSM 1728 / JCM 9062 / NBRC 15155 / AMRC-C165)</name>
    <dbReference type="NCBI Taxonomy" id="273075"/>
    <lineage>
        <taxon>Archaea</taxon>
        <taxon>Methanobacteriati</taxon>
        <taxon>Thermoplasmatota</taxon>
        <taxon>Thermoplasmata</taxon>
        <taxon>Thermoplasmatales</taxon>
        <taxon>Thermoplasmataceae</taxon>
        <taxon>Thermoplasma</taxon>
    </lineage>
</organism>
<name>COXX_THEAC</name>
<sequence>MTSKAMLYFSYTKPKVWSLLVFVGAIGAVIAIPYFNLHYISLIVLATIAVMLGSMGAEATTNYIDKDIDAVMSRTMKRPLVTGQIKPINGLLFGLVLMFLSIAILAAFGKLYAALFMGIGLFDNVFIYSYLTKRRTPWNIILGGFSGGFPVVIGWYTVTSKFSILPWFLFLLVVVWIPIHVWSLAYRYRDDYNRAHVPMMTSIHNDRISAICISSAAIILFAFSIIPAFFRVMPMVYMILASAIAVPMIFYSIVFVRHPDRKNSLKLFIYSSPYLAIIFVLVLIFRFL</sequence>
<proteinExistence type="inferred from homology"/>
<dbReference type="EC" id="2.5.1.141" evidence="1"/>
<dbReference type="EMBL" id="AL445064">
    <property type="protein sequence ID" value="CAC11577.1"/>
    <property type="molecule type" value="Genomic_DNA"/>
</dbReference>
<dbReference type="RefSeq" id="WP_010900862.1">
    <property type="nucleotide sequence ID" value="NC_002578.1"/>
</dbReference>
<dbReference type="SMR" id="Q9HL05"/>
<dbReference type="FunCoup" id="Q9HL05">
    <property type="interactions" value="185"/>
</dbReference>
<dbReference type="STRING" id="273075.gene:9571655"/>
<dbReference type="PaxDb" id="273075-Ta0435"/>
<dbReference type="EnsemblBacteria" id="CAC11577">
    <property type="protein sequence ID" value="CAC11577"/>
    <property type="gene ID" value="CAC11577"/>
</dbReference>
<dbReference type="KEGG" id="tac:Ta0435"/>
<dbReference type="eggNOG" id="arCOG00479">
    <property type="taxonomic scope" value="Archaea"/>
</dbReference>
<dbReference type="HOGENOM" id="CLU_029631_0_1_2"/>
<dbReference type="InParanoid" id="Q9HL05"/>
<dbReference type="OrthoDB" id="131615at2157"/>
<dbReference type="UniPathway" id="UPA00834">
    <property type="reaction ID" value="UER00712"/>
</dbReference>
<dbReference type="Proteomes" id="UP000001024">
    <property type="component" value="Chromosome"/>
</dbReference>
<dbReference type="GO" id="GO:0005886">
    <property type="term" value="C:plasma membrane"/>
    <property type="evidence" value="ECO:0007669"/>
    <property type="project" value="UniProtKB-SubCell"/>
</dbReference>
<dbReference type="GO" id="GO:0008495">
    <property type="term" value="F:protoheme IX farnesyltransferase activity"/>
    <property type="evidence" value="ECO:0007669"/>
    <property type="project" value="UniProtKB-UniRule"/>
</dbReference>
<dbReference type="GO" id="GO:0048034">
    <property type="term" value="P:heme O biosynthetic process"/>
    <property type="evidence" value="ECO:0007669"/>
    <property type="project" value="UniProtKB-UniRule"/>
</dbReference>
<dbReference type="CDD" id="cd13957">
    <property type="entry name" value="PT_UbiA_Cox10"/>
    <property type="match status" value="1"/>
</dbReference>
<dbReference type="Gene3D" id="1.10.357.140">
    <property type="entry name" value="UbiA prenyltransferase"/>
    <property type="match status" value="1"/>
</dbReference>
<dbReference type="HAMAP" id="MF_00154">
    <property type="entry name" value="CyoE_CtaB"/>
    <property type="match status" value="1"/>
</dbReference>
<dbReference type="InterPro" id="IPR006369">
    <property type="entry name" value="Protohaem_IX_farnesylTrfase"/>
</dbReference>
<dbReference type="InterPro" id="IPR000537">
    <property type="entry name" value="UbiA_prenyltransferase"/>
</dbReference>
<dbReference type="InterPro" id="IPR044878">
    <property type="entry name" value="UbiA_sf"/>
</dbReference>
<dbReference type="NCBIfam" id="TIGR01473">
    <property type="entry name" value="cyoE_ctaB"/>
    <property type="match status" value="1"/>
</dbReference>
<dbReference type="NCBIfam" id="NF003349">
    <property type="entry name" value="PRK04375.1-2"/>
    <property type="match status" value="1"/>
</dbReference>
<dbReference type="PANTHER" id="PTHR43448">
    <property type="entry name" value="PROTOHEME IX FARNESYLTRANSFERASE, MITOCHONDRIAL"/>
    <property type="match status" value="1"/>
</dbReference>
<dbReference type="PANTHER" id="PTHR43448:SF2">
    <property type="entry name" value="PROTOHEME IX FARNESYLTRANSFERASE, MITOCHONDRIAL"/>
    <property type="match status" value="1"/>
</dbReference>
<dbReference type="Pfam" id="PF01040">
    <property type="entry name" value="UbiA"/>
    <property type="match status" value="1"/>
</dbReference>
<reference key="1">
    <citation type="journal article" date="2000" name="Nature">
        <title>The genome sequence of the thermoacidophilic scavenger Thermoplasma acidophilum.</title>
        <authorList>
            <person name="Ruepp A."/>
            <person name="Graml W."/>
            <person name="Santos-Martinez M.-L."/>
            <person name="Koretke K.K."/>
            <person name="Volker C."/>
            <person name="Mewes H.-W."/>
            <person name="Frishman D."/>
            <person name="Stocker S."/>
            <person name="Lupas A.N."/>
            <person name="Baumeister W."/>
        </authorList>
    </citation>
    <scope>NUCLEOTIDE SEQUENCE [LARGE SCALE GENOMIC DNA]</scope>
    <source>
        <strain>ATCC 25905 / DSM 1728 / JCM 9062 / NBRC 15155 / AMRC-C165</strain>
    </source>
</reference>
<comment type="function">
    <text evidence="1">Converts heme B (protoheme IX) to heme O by substitution of the vinyl group on carbon 2 of heme B porphyrin ring with a hydroxyethyl farnesyl side group.</text>
</comment>
<comment type="catalytic activity">
    <reaction evidence="1">
        <text>heme b + (2E,6E)-farnesyl diphosphate + H2O = Fe(II)-heme o + diphosphate</text>
        <dbReference type="Rhea" id="RHEA:28070"/>
        <dbReference type="ChEBI" id="CHEBI:15377"/>
        <dbReference type="ChEBI" id="CHEBI:33019"/>
        <dbReference type="ChEBI" id="CHEBI:60344"/>
        <dbReference type="ChEBI" id="CHEBI:60530"/>
        <dbReference type="ChEBI" id="CHEBI:175763"/>
        <dbReference type="EC" id="2.5.1.141"/>
    </reaction>
</comment>
<comment type="pathway">
    <text evidence="1">Porphyrin-containing compound metabolism; heme O biosynthesis; heme O from protoheme: step 1/1.</text>
</comment>
<comment type="subcellular location">
    <subcellularLocation>
        <location evidence="1">Cell membrane</location>
        <topology evidence="1">Multi-pass membrane protein</topology>
    </subcellularLocation>
</comment>
<comment type="miscellaneous">
    <text evidence="1">Carbon 2 of the heme B porphyrin ring is defined according to the Fischer nomenclature.</text>
</comment>
<comment type="similarity">
    <text evidence="1">Belongs to the UbiA prenyltransferase family. Protoheme IX farnesyltransferase subfamily.</text>
</comment>
<evidence type="ECO:0000255" key="1">
    <source>
        <dbReference type="HAMAP-Rule" id="MF_00154"/>
    </source>
</evidence>
<protein>
    <recommendedName>
        <fullName evidence="1">Protoheme IX farnesyltransferase</fullName>
        <ecNumber evidence="1">2.5.1.141</ecNumber>
    </recommendedName>
    <alternativeName>
        <fullName evidence="1">Heme B farnesyltransferase</fullName>
    </alternativeName>
    <alternativeName>
        <fullName evidence="1">Heme O synthase</fullName>
    </alternativeName>
</protein>
<gene>
    <name evidence="1" type="primary">ctaB</name>
    <name type="ordered locus">Ta0435</name>
</gene>